<keyword id="KW-1003">Cell membrane</keyword>
<keyword id="KW-0472">Membrane</keyword>
<keyword id="KW-1185">Reference proteome</keyword>
<organism>
    <name type="scientific">Lodderomyces elongisporus (strain ATCC 11503 / CBS 2605 / JCM 1781 / NBRC 1676 / NRRL YB-4239)</name>
    <name type="common">Yeast</name>
    <name type="synonym">Saccharomyces elongisporus</name>
    <dbReference type="NCBI Taxonomy" id="379508"/>
    <lineage>
        <taxon>Eukaryota</taxon>
        <taxon>Fungi</taxon>
        <taxon>Dikarya</taxon>
        <taxon>Ascomycota</taxon>
        <taxon>Saccharomycotina</taxon>
        <taxon>Pichiomycetes</taxon>
        <taxon>Debaryomycetaceae</taxon>
        <taxon>Candida/Lodderomyces clade</taxon>
        <taxon>Lodderomyces</taxon>
    </lineage>
</organism>
<accession>A5DZ21</accession>
<comment type="function">
    <text evidence="1">Involved in the control of energetic metabolism and significantly contribute to cell fitness, especially under respiratory growth conditions.</text>
</comment>
<comment type="subcellular location">
    <subcellularLocation>
        <location evidence="1">Cell membrane</location>
        <topology evidence="1">Peripheral membrane protein</topology>
    </subcellularLocation>
</comment>
<comment type="similarity">
    <text evidence="2">Belongs to the RGI1 family.</text>
</comment>
<dbReference type="EMBL" id="CH981526">
    <property type="protein sequence ID" value="EDK44429.1"/>
    <property type="molecule type" value="Genomic_DNA"/>
</dbReference>
<dbReference type="RefSeq" id="XP_001526050.1">
    <property type="nucleotide sequence ID" value="XM_001526000.1"/>
</dbReference>
<dbReference type="SMR" id="A5DZ21"/>
<dbReference type="FunCoup" id="A5DZ21">
    <property type="interactions" value="76"/>
</dbReference>
<dbReference type="STRING" id="379508.A5DZ21"/>
<dbReference type="GeneID" id="5233132"/>
<dbReference type="KEGG" id="lel:PVL30_003449"/>
<dbReference type="VEuPathDB" id="FungiDB:LELG_02608"/>
<dbReference type="eggNOG" id="ENOG502S6JA">
    <property type="taxonomic scope" value="Eukaryota"/>
</dbReference>
<dbReference type="HOGENOM" id="CLU_118207_0_0_1"/>
<dbReference type="InParanoid" id="A5DZ21"/>
<dbReference type="OMA" id="HLKYYPP"/>
<dbReference type="OrthoDB" id="4082176at2759"/>
<dbReference type="Proteomes" id="UP000001996">
    <property type="component" value="Unassembled WGS sequence"/>
</dbReference>
<dbReference type="GO" id="GO:0005886">
    <property type="term" value="C:plasma membrane"/>
    <property type="evidence" value="ECO:0007669"/>
    <property type="project" value="UniProtKB-SubCell"/>
</dbReference>
<dbReference type="GO" id="GO:0006112">
    <property type="term" value="P:energy reserve metabolic process"/>
    <property type="evidence" value="ECO:0007669"/>
    <property type="project" value="InterPro"/>
</dbReference>
<dbReference type="Gene3D" id="3.40.1000.40">
    <property type="entry name" value="Respiratory growth induced protein 1"/>
    <property type="match status" value="1"/>
</dbReference>
<dbReference type="InterPro" id="IPR022554">
    <property type="entry name" value="RGI1"/>
</dbReference>
<dbReference type="InterPro" id="IPR038235">
    <property type="entry name" value="RGI1_sf"/>
</dbReference>
<dbReference type="Pfam" id="PF10843">
    <property type="entry name" value="RGI1"/>
    <property type="match status" value="1"/>
</dbReference>
<evidence type="ECO:0000250" key="1"/>
<evidence type="ECO:0000305" key="2"/>
<name>RGI1_LODEL</name>
<sequence>MSGKKKSKSDTVPLDLDNIKPLDHLQAVPKTRKMSMTSIESADEPGGFKEVLLPPTIKEFDELEQFEAFVRDETWDNDFDYFHGRLHYYPPFVLKECHDEIEKIKPTSNKNSSKFKRNLQHHIKKHLIKDLEKCCGYELNFDKAEEIESFDKLTWKFKDETDHGFSKEEEDKYDRHWKIELDITSHNDSALVDIDMKSIPIGH</sequence>
<protein>
    <recommendedName>
        <fullName>Respiratory growth induced protein 1</fullName>
    </recommendedName>
</protein>
<proteinExistence type="inferred from homology"/>
<gene>
    <name type="primary">RGI1</name>
    <name type="ORF">LELG_02608</name>
</gene>
<feature type="chain" id="PRO_0000402288" description="Respiratory growth induced protein 1">
    <location>
        <begin position="1"/>
        <end position="203"/>
    </location>
</feature>
<reference key="1">
    <citation type="journal article" date="2009" name="Nature">
        <title>Evolution of pathogenicity and sexual reproduction in eight Candida genomes.</title>
        <authorList>
            <person name="Butler G."/>
            <person name="Rasmussen M.D."/>
            <person name="Lin M.F."/>
            <person name="Santos M.A.S."/>
            <person name="Sakthikumar S."/>
            <person name="Munro C.A."/>
            <person name="Rheinbay E."/>
            <person name="Grabherr M."/>
            <person name="Forche A."/>
            <person name="Reedy J.L."/>
            <person name="Agrafioti I."/>
            <person name="Arnaud M.B."/>
            <person name="Bates S."/>
            <person name="Brown A.J.P."/>
            <person name="Brunke S."/>
            <person name="Costanzo M.C."/>
            <person name="Fitzpatrick D.A."/>
            <person name="de Groot P.W.J."/>
            <person name="Harris D."/>
            <person name="Hoyer L.L."/>
            <person name="Hube B."/>
            <person name="Klis F.M."/>
            <person name="Kodira C."/>
            <person name="Lennard N."/>
            <person name="Logue M.E."/>
            <person name="Martin R."/>
            <person name="Neiman A.M."/>
            <person name="Nikolaou E."/>
            <person name="Quail M.A."/>
            <person name="Quinn J."/>
            <person name="Santos M.C."/>
            <person name="Schmitzberger F.F."/>
            <person name="Sherlock G."/>
            <person name="Shah P."/>
            <person name="Silverstein K.A.T."/>
            <person name="Skrzypek M.S."/>
            <person name="Soll D."/>
            <person name="Staggs R."/>
            <person name="Stansfield I."/>
            <person name="Stumpf M.P.H."/>
            <person name="Sudbery P.E."/>
            <person name="Srikantha T."/>
            <person name="Zeng Q."/>
            <person name="Berman J."/>
            <person name="Berriman M."/>
            <person name="Heitman J."/>
            <person name="Gow N.A.R."/>
            <person name="Lorenz M.C."/>
            <person name="Birren B.W."/>
            <person name="Kellis M."/>
            <person name="Cuomo C.A."/>
        </authorList>
    </citation>
    <scope>NUCLEOTIDE SEQUENCE [LARGE SCALE GENOMIC DNA]</scope>
    <source>
        <strain>ATCC 11503 / BCRC 21390 / CBS 2605 / JCM 1781 / NBRC 1676 / NRRL YB-4239</strain>
    </source>
</reference>